<keyword id="KW-0903">Direct protein sequencing</keyword>
<keyword id="KW-0520">NAD</keyword>
<keyword id="KW-0560">Oxidoreductase</keyword>
<keyword id="KW-1185">Reference proteome</keyword>
<sequence length="389" mass="42982">MLSFDYSIPTKVFFGKGKIDVIGEEIKKYGSRVLIVYGGGSIKRNGIYDRATAILKENNIAFYELSGVEPNPRITTVKKGIEICRENNVDLVLAIGGGSAIDCSKVIAAGVYYDGDTWDMVKDPSKITKVLPIASILTLSATGSEMDQIAVISNMETNEKLGVGHDDMRPKFSVLDPTYTFTVPKNQTAAGTADIMSHTFESYFSGVEGAYVQDGIAEAILRTCIKYGKIAMEKTDDYEARANLMWASSLAINGLLSLGKDRKWSCHPMEHELSAYYDITHGVGLAILTPNWMEYILNDDTLHKFVSYGINVWGIDKNKDNYEIAREAIKNTREYFNSLGIPSKLREVGIGKDKLELMAKQAVRNSGGTIGSLRPINAEDVLEIFKKSY</sequence>
<evidence type="ECO:0000305" key="1"/>
<name>ADHA_CLOAB</name>
<feature type="chain" id="PRO_0000087822" description="NADH-dependent butanol dehydrogenase A">
    <location>
        <begin position="1"/>
        <end position="389"/>
    </location>
</feature>
<feature type="sequence conflict" description="In Ref. 1; AAA23206." evidence="1" ref="1">
    <original>A</original>
    <variation>R</variation>
    <location>
        <position position="217"/>
    </location>
</feature>
<reference key="1">
    <citation type="journal article" date="1992" name="J. Bacteriol.">
        <title>Molecular characterization of two Clostridium acetobutylicum ATCC 824 butanol dehydrogenase isozyme genes.</title>
        <authorList>
            <person name="Walter K.A."/>
            <person name="Bennett G.N."/>
            <person name="Papoutsakis E.T."/>
        </authorList>
    </citation>
    <scope>NUCLEOTIDE SEQUENCE [GENOMIC DNA]</scope>
    <source>
        <strain>ATCC 824 / DSM 792 / JCM 1419 / IAM 19013 / LMG 5710 / NBRC 13948 / NRRL B-527 / VKM B-1787 / 2291 / W</strain>
    </source>
</reference>
<reference key="2">
    <citation type="journal article" date="2001" name="J. Bacteriol.">
        <title>Genome sequence and comparative analysis of the solvent-producing bacterium Clostridium acetobutylicum.</title>
        <authorList>
            <person name="Noelling J."/>
            <person name="Breton G."/>
            <person name="Omelchenko M.V."/>
            <person name="Makarova K.S."/>
            <person name="Zeng Q."/>
            <person name="Gibson R."/>
            <person name="Lee H.M."/>
            <person name="Dubois J."/>
            <person name="Qiu D."/>
            <person name="Hitti J."/>
            <person name="Wolf Y.I."/>
            <person name="Tatusov R.L."/>
            <person name="Sabathe F."/>
            <person name="Doucette-Stamm L.A."/>
            <person name="Soucaille P."/>
            <person name="Daly M.J."/>
            <person name="Bennett G.N."/>
            <person name="Koonin E.V."/>
            <person name="Smith D.R."/>
        </authorList>
    </citation>
    <scope>NUCLEOTIDE SEQUENCE [LARGE SCALE GENOMIC DNA]</scope>
    <source>
        <strain>ATCC 824 / DSM 792 / JCM 1419 / IAM 19013 / LMG 5710 / NBRC 13948 / NRRL B-527 / VKM B-1787 / 2291 / W</strain>
    </source>
</reference>
<reference key="3">
    <citation type="journal article" date="1991" name="Ann. N. Y. Acad. Sci.">
        <title>Cloning of an NADH-dependent butanol dehydrogenase gene from Clostridium acetobutylicum.</title>
        <authorList>
            <person name="Petersen D.J."/>
            <person name="Welch R.W."/>
            <person name="Walter K.A."/>
            <person name="Mermelstein L.D."/>
            <person name="Papoutsakis E.T."/>
            <person name="Rudolph F.B."/>
            <person name="Bennett G.N."/>
        </authorList>
    </citation>
    <scope>PROTEIN SEQUENCE OF N-TERMINUS</scope>
</reference>
<proteinExistence type="evidence at protein level"/>
<dbReference type="EC" id="1.1.1.-"/>
<dbReference type="EMBL" id="M96945">
    <property type="protein sequence ID" value="AAA23206.1"/>
    <property type="molecule type" value="Genomic_DNA"/>
</dbReference>
<dbReference type="EMBL" id="AE001437">
    <property type="protein sequence ID" value="AAK81232.1"/>
    <property type="molecule type" value="Genomic_DNA"/>
</dbReference>
<dbReference type="PIR" id="A47013">
    <property type="entry name" value="A47013"/>
</dbReference>
<dbReference type="PIR" id="E97305">
    <property type="entry name" value="E97305"/>
</dbReference>
<dbReference type="RefSeq" id="NP_349892.1">
    <property type="nucleotide sequence ID" value="NC_003030.1"/>
</dbReference>
<dbReference type="RefSeq" id="WP_010966572.1">
    <property type="nucleotide sequence ID" value="NC_003030.1"/>
</dbReference>
<dbReference type="SMR" id="Q04944"/>
<dbReference type="STRING" id="272562.CA_C3299"/>
<dbReference type="KEGG" id="cac:CA_C3299"/>
<dbReference type="PATRIC" id="fig|272562.8.peg.3477"/>
<dbReference type="eggNOG" id="COG1979">
    <property type="taxonomic scope" value="Bacteria"/>
</dbReference>
<dbReference type="HOGENOM" id="CLU_007207_0_4_9"/>
<dbReference type="OrthoDB" id="9801156at2"/>
<dbReference type="BioCyc" id="MetaCyc:BDHACLOS-MONOMER"/>
<dbReference type="UniPathway" id="UPA00743"/>
<dbReference type="Proteomes" id="UP000000814">
    <property type="component" value="Chromosome"/>
</dbReference>
<dbReference type="GO" id="GO:0005829">
    <property type="term" value="C:cytosol"/>
    <property type="evidence" value="ECO:0007669"/>
    <property type="project" value="TreeGrafter"/>
</dbReference>
<dbReference type="GO" id="GO:0004022">
    <property type="term" value="F:alcohol dehydrogenase (NAD+) activity"/>
    <property type="evidence" value="ECO:0000314"/>
    <property type="project" value="CACAO"/>
</dbReference>
<dbReference type="GO" id="GO:0008106">
    <property type="term" value="F:alcohol dehydrogenase (NADP+) activity"/>
    <property type="evidence" value="ECO:0007669"/>
    <property type="project" value="TreeGrafter"/>
</dbReference>
<dbReference type="GO" id="GO:1990362">
    <property type="term" value="F:butanol dehydrogenase (NAD+) activity"/>
    <property type="evidence" value="ECO:0000314"/>
    <property type="project" value="GO_Central"/>
</dbReference>
<dbReference type="GO" id="GO:0046872">
    <property type="term" value="F:metal ion binding"/>
    <property type="evidence" value="ECO:0007669"/>
    <property type="project" value="InterPro"/>
</dbReference>
<dbReference type="GO" id="GO:1990002">
    <property type="term" value="F:methylglyoxal reductase (NADPH) (acetol producing) activity"/>
    <property type="evidence" value="ECO:0007669"/>
    <property type="project" value="TreeGrafter"/>
</dbReference>
<dbReference type="GO" id="GO:0071271">
    <property type="term" value="P:1-butanol biosynthetic process"/>
    <property type="evidence" value="ECO:0007669"/>
    <property type="project" value="UniProtKB-UniPathway"/>
</dbReference>
<dbReference type="CDD" id="cd08187">
    <property type="entry name" value="BDH"/>
    <property type="match status" value="1"/>
</dbReference>
<dbReference type="FunFam" id="3.40.50.1970:FF:000003">
    <property type="entry name" value="Alcohol dehydrogenase, iron-containing"/>
    <property type="match status" value="1"/>
</dbReference>
<dbReference type="FunFam" id="1.20.1090.10:FF:000009">
    <property type="entry name" value="NADH-dependent butanol dehydrogenase"/>
    <property type="match status" value="1"/>
</dbReference>
<dbReference type="Gene3D" id="3.40.50.1970">
    <property type="match status" value="1"/>
</dbReference>
<dbReference type="Gene3D" id="1.20.1090.10">
    <property type="entry name" value="Dehydroquinate synthase-like - alpha domain"/>
    <property type="match status" value="1"/>
</dbReference>
<dbReference type="InterPro" id="IPR001670">
    <property type="entry name" value="ADH_Fe/GldA"/>
</dbReference>
<dbReference type="InterPro" id="IPR056798">
    <property type="entry name" value="ADH_Fe_C"/>
</dbReference>
<dbReference type="InterPro" id="IPR018211">
    <property type="entry name" value="ADH_Fe_CS"/>
</dbReference>
<dbReference type="InterPro" id="IPR044731">
    <property type="entry name" value="BDH-like"/>
</dbReference>
<dbReference type="PANTHER" id="PTHR43633">
    <property type="entry name" value="ALCOHOL DEHYDROGENASE YQHD"/>
    <property type="match status" value="1"/>
</dbReference>
<dbReference type="PANTHER" id="PTHR43633:SF1">
    <property type="entry name" value="ALCOHOL DEHYDROGENASE YQHD"/>
    <property type="match status" value="1"/>
</dbReference>
<dbReference type="Pfam" id="PF25137">
    <property type="entry name" value="ADH_Fe_C"/>
    <property type="match status" value="1"/>
</dbReference>
<dbReference type="Pfam" id="PF00465">
    <property type="entry name" value="Fe-ADH"/>
    <property type="match status" value="1"/>
</dbReference>
<dbReference type="SUPFAM" id="SSF56796">
    <property type="entry name" value="Dehydroquinate synthase-like"/>
    <property type="match status" value="1"/>
</dbReference>
<dbReference type="PROSITE" id="PS00913">
    <property type="entry name" value="ADH_IRON_1"/>
    <property type="match status" value="1"/>
</dbReference>
<dbReference type="PROSITE" id="PS00060">
    <property type="entry name" value="ADH_IRON_2"/>
    <property type="match status" value="1"/>
</dbReference>
<dbReference type="PROSITE" id="PS00455">
    <property type="entry name" value="AMP_BINDING"/>
    <property type="match status" value="1"/>
</dbReference>
<gene>
    <name type="primary">bdhA</name>
    <name type="ordered locus">CA_C3299</name>
</gene>
<organism>
    <name type="scientific">Clostridium acetobutylicum (strain ATCC 824 / DSM 792 / JCM 1419 / IAM 19013 / LMG 5710 / NBRC 13948 / NRRL B-527 / VKM B-1787 / 2291 / W)</name>
    <dbReference type="NCBI Taxonomy" id="272562"/>
    <lineage>
        <taxon>Bacteria</taxon>
        <taxon>Bacillati</taxon>
        <taxon>Bacillota</taxon>
        <taxon>Clostridia</taxon>
        <taxon>Eubacteriales</taxon>
        <taxon>Clostridiaceae</taxon>
        <taxon>Clostridium</taxon>
    </lineage>
</organism>
<comment type="pathway">
    <text>Alcohol metabolism; butanol biosynthesis.</text>
</comment>
<comment type="subunit">
    <text>Homodimer.</text>
</comment>
<comment type="miscellaneous">
    <text>Primarily NADH-dependent, although some NADPH-dependent activity was observed.</text>
</comment>
<comment type="similarity">
    <text evidence="1">Belongs to the iron-containing alcohol dehydrogenase family.</text>
</comment>
<accession>Q04944</accession>
<protein>
    <recommendedName>
        <fullName>NADH-dependent butanol dehydrogenase A</fullName>
        <ecNumber>1.1.1.-</ecNumber>
    </recommendedName>
    <alternativeName>
        <fullName>BDH I</fullName>
    </alternativeName>
</protein>